<keyword id="KW-1185">Reference proteome</keyword>
<keyword id="KW-0687">Ribonucleoprotein</keyword>
<keyword id="KW-0689">Ribosomal protein</keyword>
<keyword id="KW-0694">RNA-binding</keyword>
<keyword id="KW-0699">rRNA-binding</keyword>
<proteinExistence type="inferred from homology"/>
<comment type="function">
    <text evidence="1">This protein binds to the 23S rRNA, and is important in its secondary structure. It is located near the subunit interface in the base of the L7/L12 stalk, and near the tRNA binding site of the peptidyltransferase center.</text>
</comment>
<comment type="subunit">
    <text evidence="1">Part of the 50S ribosomal subunit.</text>
</comment>
<comment type="similarity">
    <text evidence="1">Belongs to the universal ribosomal protein uL6 family.</text>
</comment>
<sequence length="177" mass="18793">MSRVGKMPIAVPKGVDVAINADQISVKGSLGTLVRPVNRLVSVKNEDGKLSFAPADESAAANAMSGTMRALVANMVNGVSKGFERKLTLVGVGFRAQAQGAKLNLQVGFSHPVVKDMPAGIKVECPTQTEIVIKGSDRQVVGQIAAEVRAIRPPEPYKGKGIRYAEEKVSLKETKKK</sequence>
<feature type="chain" id="PRO_1000055260" description="Large ribosomal subunit protein uL6">
    <location>
        <begin position="1"/>
        <end position="177"/>
    </location>
</feature>
<organism>
    <name type="scientific">Methylibium petroleiphilum (strain ATCC BAA-1232 / LMG 22953 / PM1)</name>
    <dbReference type="NCBI Taxonomy" id="420662"/>
    <lineage>
        <taxon>Bacteria</taxon>
        <taxon>Pseudomonadati</taxon>
        <taxon>Pseudomonadota</taxon>
        <taxon>Betaproteobacteria</taxon>
        <taxon>Burkholderiales</taxon>
        <taxon>Sphaerotilaceae</taxon>
        <taxon>Methylibium</taxon>
    </lineage>
</organism>
<dbReference type="EMBL" id="CP000555">
    <property type="protein sequence ID" value="ABM96381.1"/>
    <property type="molecule type" value="Genomic_DNA"/>
</dbReference>
<dbReference type="RefSeq" id="WP_011831002.1">
    <property type="nucleotide sequence ID" value="NC_008825.1"/>
</dbReference>
<dbReference type="SMR" id="A2SLE2"/>
<dbReference type="STRING" id="420662.Mpe_A3428"/>
<dbReference type="KEGG" id="mpt:Mpe_A3428"/>
<dbReference type="eggNOG" id="COG0097">
    <property type="taxonomic scope" value="Bacteria"/>
</dbReference>
<dbReference type="HOGENOM" id="CLU_065464_1_2_4"/>
<dbReference type="Proteomes" id="UP000000366">
    <property type="component" value="Chromosome"/>
</dbReference>
<dbReference type="GO" id="GO:0022625">
    <property type="term" value="C:cytosolic large ribosomal subunit"/>
    <property type="evidence" value="ECO:0007669"/>
    <property type="project" value="TreeGrafter"/>
</dbReference>
<dbReference type="GO" id="GO:0019843">
    <property type="term" value="F:rRNA binding"/>
    <property type="evidence" value="ECO:0007669"/>
    <property type="project" value="UniProtKB-UniRule"/>
</dbReference>
<dbReference type="GO" id="GO:0003735">
    <property type="term" value="F:structural constituent of ribosome"/>
    <property type="evidence" value="ECO:0007669"/>
    <property type="project" value="InterPro"/>
</dbReference>
<dbReference type="GO" id="GO:0002181">
    <property type="term" value="P:cytoplasmic translation"/>
    <property type="evidence" value="ECO:0007669"/>
    <property type="project" value="TreeGrafter"/>
</dbReference>
<dbReference type="FunFam" id="3.90.930.12:FF:000001">
    <property type="entry name" value="50S ribosomal protein L6"/>
    <property type="match status" value="1"/>
</dbReference>
<dbReference type="FunFam" id="3.90.930.12:FF:000002">
    <property type="entry name" value="50S ribosomal protein L6"/>
    <property type="match status" value="1"/>
</dbReference>
<dbReference type="Gene3D" id="3.90.930.12">
    <property type="entry name" value="Ribosomal protein L6, alpha-beta domain"/>
    <property type="match status" value="2"/>
</dbReference>
<dbReference type="HAMAP" id="MF_01365_B">
    <property type="entry name" value="Ribosomal_uL6_B"/>
    <property type="match status" value="1"/>
</dbReference>
<dbReference type="InterPro" id="IPR000702">
    <property type="entry name" value="Ribosomal_uL6-like"/>
</dbReference>
<dbReference type="InterPro" id="IPR036789">
    <property type="entry name" value="Ribosomal_uL6-like_a/b-dom_sf"/>
</dbReference>
<dbReference type="InterPro" id="IPR020040">
    <property type="entry name" value="Ribosomal_uL6_a/b-dom"/>
</dbReference>
<dbReference type="InterPro" id="IPR019906">
    <property type="entry name" value="Ribosomal_uL6_bac-type"/>
</dbReference>
<dbReference type="InterPro" id="IPR002358">
    <property type="entry name" value="Ribosomal_uL6_CS"/>
</dbReference>
<dbReference type="NCBIfam" id="TIGR03654">
    <property type="entry name" value="L6_bact"/>
    <property type="match status" value="1"/>
</dbReference>
<dbReference type="PANTHER" id="PTHR11655">
    <property type="entry name" value="60S/50S RIBOSOMAL PROTEIN L6/L9"/>
    <property type="match status" value="1"/>
</dbReference>
<dbReference type="PANTHER" id="PTHR11655:SF14">
    <property type="entry name" value="LARGE RIBOSOMAL SUBUNIT PROTEIN UL6M"/>
    <property type="match status" value="1"/>
</dbReference>
<dbReference type="Pfam" id="PF00347">
    <property type="entry name" value="Ribosomal_L6"/>
    <property type="match status" value="2"/>
</dbReference>
<dbReference type="PIRSF" id="PIRSF002162">
    <property type="entry name" value="Ribosomal_L6"/>
    <property type="match status" value="1"/>
</dbReference>
<dbReference type="PRINTS" id="PR00059">
    <property type="entry name" value="RIBOSOMALL6"/>
</dbReference>
<dbReference type="SUPFAM" id="SSF56053">
    <property type="entry name" value="Ribosomal protein L6"/>
    <property type="match status" value="2"/>
</dbReference>
<dbReference type="PROSITE" id="PS00525">
    <property type="entry name" value="RIBOSOMAL_L6_1"/>
    <property type="match status" value="1"/>
</dbReference>
<accession>A2SLE2</accession>
<evidence type="ECO:0000255" key="1">
    <source>
        <dbReference type="HAMAP-Rule" id="MF_01365"/>
    </source>
</evidence>
<evidence type="ECO:0000305" key="2"/>
<protein>
    <recommendedName>
        <fullName evidence="1">Large ribosomal subunit protein uL6</fullName>
    </recommendedName>
    <alternativeName>
        <fullName evidence="2">50S ribosomal protein L6</fullName>
    </alternativeName>
</protein>
<gene>
    <name evidence="1" type="primary">rplF</name>
    <name type="ordered locus">Mpe_A3428</name>
</gene>
<name>RL6_METPP</name>
<reference key="1">
    <citation type="journal article" date="2007" name="J. Bacteriol.">
        <title>Whole-genome analysis of the methyl tert-butyl ether-degrading beta-proteobacterium Methylibium petroleiphilum PM1.</title>
        <authorList>
            <person name="Kane S.R."/>
            <person name="Chakicherla A.Y."/>
            <person name="Chain P.S.G."/>
            <person name="Schmidt R."/>
            <person name="Shin M.W."/>
            <person name="Legler T.C."/>
            <person name="Scow K.M."/>
            <person name="Larimer F.W."/>
            <person name="Lucas S.M."/>
            <person name="Richardson P.M."/>
            <person name="Hristova K.R."/>
        </authorList>
    </citation>
    <scope>NUCLEOTIDE SEQUENCE [LARGE SCALE GENOMIC DNA]</scope>
    <source>
        <strain>ATCC BAA-1232 / LMG 22953 / PM1</strain>
    </source>
</reference>